<keyword id="KW-0226">DNA condensation</keyword>
<keyword id="KW-0238">DNA-binding</keyword>
<proteinExistence type="inferred from homology"/>
<gene>
    <name type="primary">hbb</name>
</gene>
<organism>
    <name type="scientific">Borreliella japonica</name>
    <name type="common">Borrelia japonica</name>
    <dbReference type="NCBI Taxonomy" id="34095"/>
    <lineage>
        <taxon>Bacteria</taxon>
        <taxon>Pseudomonadati</taxon>
        <taxon>Spirochaetota</taxon>
        <taxon>Spirochaetia</taxon>
        <taxon>Spirochaetales</taxon>
        <taxon>Borreliaceae</taxon>
        <taxon>Borreliella</taxon>
    </lineage>
</organism>
<reference key="1">
    <citation type="journal article" date="1997" name="Int. J. Syst. Bacteriol.">
        <title>A phylogenetic analysis of Borrelia burgdorferi sensu lato based on sequence information from the hbb gene, coding for a histone-like protein.</title>
        <authorList>
            <person name="Valsangiacomo C."/>
            <person name="Balmelli T."/>
            <person name="Piffaretti J.C."/>
        </authorList>
    </citation>
    <scope>NUCLEOTIDE SEQUENCE [GENOMIC DNA]</scope>
    <source>
        <strain>0612</strain>
        <strain>ATCC 51557 / JCM 8951 / HO14</strain>
        <strain>COW611A</strain>
        <strain>COW611C</strain>
        <strain>F63B</strain>
    </source>
</reference>
<comment type="function">
    <text evidence="1">Histone-like DNA-binding protein which is capable of wrapping DNA to stabilize it, and thus to prevent its denaturation under extreme environmental conditions.</text>
</comment>
<comment type="similarity">
    <text evidence="2">Belongs to the bacterial histone-like protein family.</text>
</comment>
<protein>
    <recommendedName>
        <fullName>DNA-binding protein HBbu</fullName>
    </recommendedName>
</protein>
<sequence>MSFSRRPKVTKSDIVDQISLNIRNNNLKLEKKYIRLVIDAFFEELKGNLCSNNVIEFRSFGTFEVRKRKGRLNARNPQTGEYVKVLDHHVAYFRPGKDLKERVWGIKG</sequence>
<name>DBH_BORJA</name>
<accession>Q45231</accession>
<accession>Q45227</accession>
<accession>Q45228</accession>
<accession>Q45229</accession>
<accession>Q45230</accession>
<feature type="chain" id="PRO_0000104921" description="DNA-binding protein HBbu">
    <location>
        <begin position="1"/>
        <end position="108"/>
    </location>
</feature>
<dbReference type="EMBL" id="U48677">
    <property type="protein sequence ID" value="AAC73099.1"/>
    <property type="molecule type" value="Genomic_DNA"/>
</dbReference>
<dbReference type="EMBL" id="U48678">
    <property type="protein sequence ID" value="AAC73100.1"/>
    <property type="molecule type" value="Genomic_DNA"/>
</dbReference>
<dbReference type="EMBL" id="U48679">
    <property type="protein sequence ID" value="AAC73101.1"/>
    <property type="molecule type" value="Genomic_DNA"/>
</dbReference>
<dbReference type="EMBL" id="U48680">
    <property type="protein sequence ID" value="AAC73102.1"/>
    <property type="molecule type" value="Genomic_DNA"/>
</dbReference>
<dbReference type="EMBL" id="U48681">
    <property type="protein sequence ID" value="AAC73103.1"/>
    <property type="molecule type" value="Genomic_DNA"/>
</dbReference>
<dbReference type="RefSeq" id="WP_091972726.1">
    <property type="nucleotide sequence ID" value="NZ_CP124062.1"/>
</dbReference>
<dbReference type="SMR" id="Q45231"/>
<dbReference type="OrthoDB" id="9799835at2"/>
<dbReference type="GO" id="GO:0005829">
    <property type="term" value="C:cytosol"/>
    <property type="evidence" value="ECO:0007669"/>
    <property type="project" value="TreeGrafter"/>
</dbReference>
<dbReference type="GO" id="GO:0003677">
    <property type="term" value="F:DNA binding"/>
    <property type="evidence" value="ECO:0007669"/>
    <property type="project" value="UniProtKB-KW"/>
</dbReference>
<dbReference type="GO" id="GO:0030527">
    <property type="term" value="F:structural constituent of chromatin"/>
    <property type="evidence" value="ECO:0007669"/>
    <property type="project" value="InterPro"/>
</dbReference>
<dbReference type="GO" id="GO:0030261">
    <property type="term" value="P:chromosome condensation"/>
    <property type="evidence" value="ECO:0007669"/>
    <property type="project" value="UniProtKB-KW"/>
</dbReference>
<dbReference type="CDD" id="cd13836">
    <property type="entry name" value="IHF_B"/>
    <property type="match status" value="1"/>
</dbReference>
<dbReference type="Gene3D" id="4.10.520.10">
    <property type="entry name" value="IHF-like DNA-binding proteins"/>
    <property type="match status" value="1"/>
</dbReference>
<dbReference type="InterPro" id="IPR000119">
    <property type="entry name" value="Hist_DNA-bd"/>
</dbReference>
<dbReference type="InterPro" id="IPR020816">
    <property type="entry name" value="Histone-like_DNA-bd_CS"/>
</dbReference>
<dbReference type="InterPro" id="IPR010992">
    <property type="entry name" value="IHF-like_DNA-bd_dom_sf"/>
</dbReference>
<dbReference type="PANTHER" id="PTHR33175">
    <property type="entry name" value="DNA-BINDING PROTEIN HU"/>
    <property type="match status" value="1"/>
</dbReference>
<dbReference type="PANTHER" id="PTHR33175:SF3">
    <property type="entry name" value="DNA-BINDING PROTEIN HU-BETA"/>
    <property type="match status" value="1"/>
</dbReference>
<dbReference type="Pfam" id="PF00216">
    <property type="entry name" value="Bac_DNA_binding"/>
    <property type="match status" value="1"/>
</dbReference>
<dbReference type="PRINTS" id="PR01727">
    <property type="entry name" value="DNABINDINGHU"/>
</dbReference>
<dbReference type="SMART" id="SM00411">
    <property type="entry name" value="BHL"/>
    <property type="match status" value="1"/>
</dbReference>
<dbReference type="SUPFAM" id="SSF47729">
    <property type="entry name" value="IHF-like DNA-binding proteins"/>
    <property type="match status" value="1"/>
</dbReference>
<dbReference type="PROSITE" id="PS00045">
    <property type="entry name" value="HISTONE_LIKE"/>
    <property type="match status" value="1"/>
</dbReference>
<evidence type="ECO:0000250" key="1"/>
<evidence type="ECO:0000305" key="2"/>